<accession>P50767</accession>
<sequence length="503" mass="56751">MENLSDRFNVLQDQLMNIYESAANTIESQIEHWQTLRKEAVLLYFARQKGVTRLGYQYVPPLAVSESRAKQAIGMMLQLQSLQKSEYAKEPWSLVDTSAETFRSPPENHFKKGPVSVEVIYDNDKDNANAYTMWRYVYYVDDDDQWHKSPSGVNHTGIYFMQGTFRHYYVLFADDASRYSRTGHWEVNVNKETVFAPVTSSTPPDSPGGQADSNTSSTTPATTTDSTSRLSSTRKQSQQTNTKGRRYGRRPSSRTRRTTQTHQRRRSRSKSRSRSRSRSRLRSRSRSRSRSYSRSRSQSSDQPQYRFRSGGQVSLITTATTTTTTATNYSTRGSGRGSSSTSSSTSKRPRRPRGGAIGGSSGRGRRSSSTSPSPSKRSRGKSESVRQRGISPDDVGKSLQSVSTRNTGRLGRLLDEALDPPVILVRGEPNTLKCFRNRAKLKYAGLYKAFSTAWSWVAGDGTERLGRSRMLISFFSFEQRKDFDKTVKYPKGVDRSYGSFDSL</sequence>
<dbReference type="EMBL" id="U31779">
    <property type="protein sequence ID" value="AAA79397.1"/>
    <property type="molecule type" value="Genomic_DNA"/>
</dbReference>
<dbReference type="SMR" id="P50767"/>
<dbReference type="Proteomes" id="UP000009165">
    <property type="component" value="Genome"/>
</dbReference>
<dbReference type="GO" id="GO:0042025">
    <property type="term" value="C:host cell nucleus"/>
    <property type="evidence" value="ECO:0007669"/>
    <property type="project" value="UniProtKB-SubCell"/>
</dbReference>
<dbReference type="GO" id="GO:0003677">
    <property type="term" value="F:DNA binding"/>
    <property type="evidence" value="ECO:0007669"/>
    <property type="project" value="UniProtKB-UniRule"/>
</dbReference>
<dbReference type="GO" id="GO:0003700">
    <property type="term" value="F:DNA-binding transcription factor activity"/>
    <property type="evidence" value="ECO:0007669"/>
    <property type="project" value="UniProtKB-UniRule"/>
</dbReference>
<dbReference type="GO" id="GO:0000166">
    <property type="term" value="F:nucleotide binding"/>
    <property type="evidence" value="ECO:0007669"/>
    <property type="project" value="UniProtKB-UniRule"/>
</dbReference>
<dbReference type="GO" id="GO:0006260">
    <property type="term" value="P:DNA replication"/>
    <property type="evidence" value="ECO:0007669"/>
    <property type="project" value="UniProtKB-KW"/>
</dbReference>
<dbReference type="GO" id="GO:0006351">
    <property type="term" value="P:DNA-templated transcription"/>
    <property type="evidence" value="ECO:0007669"/>
    <property type="project" value="UniProtKB-UniRule"/>
</dbReference>
<dbReference type="GO" id="GO:0006275">
    <property type="term" value="P:regulation of DNA replication"/>
    <property type="evidence" value="ECO:0007669"/>
    <property type="project" value="UniProtKB-UniRule"/>
</dbReference>
<dbReference type="GO" id="GO:0039693">
    <property type="term" value="P:viral DNA genome replication"/>
    <property type="evidence" value="ECO:0007669"/>
    <property type="project" value="UniProtKB-UniRule"/>
</dbReference>
<dbReference type="Gene3D" id="3.30.70.330">
    <property type="match status" value="1"/>
</dbReference>
<dbReference type="Gene3D" id="1.10.287.30">
    <property type="entry name" value="E2 (early) protein, N terminal domain, subdomain 1"/>
    <property type="match status" value="1"/>
</dbReference>
<dbReference type="Gene3D" id="2.170.200.10">
    <property type="entry name" value="Papillomavirus E2 early protein domain"/>
    <property type="match status" value="1"/>
</dbReference>
<dbReference type="HAMAP" id="MF_04001">
    <property type="entry name" value="PPV_E2"/>
    <property type="match status" value="1"/>
</dbReference>
<dbReference type="InterPro" id="IPR035975">
    <property type="entry name" value="E2/EBNA1_C_sf"/>
</dbReference>
<dbReference type="InterPro" id="IPR012677">
    <property type="entry name" value="Nucleotide-bd_a/b_plait_sf"/>
</dbReference>
<dbReference type="InterPro" id="IPR000427">
    <property type="entry name" value="Papillomavirus_E2_C"/>
</dbReference>
<dbReference type="InterPro" id="IPR001866">
    <property type="entry name" value="PPV_E2_N"/>
</dbReference>
<dbReference type="InterPro" id="IPR033668">
    <property type="entry name" value="Reg_prot_E2"/>
</dbReference>
<dbReference type="InterPro" id="IPR036050">
    <property type="entry name" value="Regulatory_protein_E2_N"/>
</dbReference>
<dbReference type="InterPro" id="IPR042503">
    <property type="entry name" value="Regulatory_protein_E2_N_1"/>
</dbReference>
<dbReference type="InterPro" id="IPR042504">
    <property type="entry name" value="Regulatory_protein_E2_N_2"/>
</dbReference>
<dbReference type="Pfam" id="PF00511">
    <property type="entry name" value="PPV_E2_C"/>
    <property type="match status" value="1"/>
</dbReference>
<dbReference type="Pfam" id="PF00508">
    <property type="entry name" value="PPV_E2_N"/>
    <property type="match status" value="1"/>
</dbReference>
<dbReference type="SUPFAM" id="SSF51332">
    <property type="entry name" value="E2 regulatory, transactivation domain"/>
    <property type="match status" value="1"/>
</dbReference>
<dbReference type="SUPFAM" id="SSF54957">
    <property type="entry name" value="Viral DNA-binding domain"/>
    <property type="match status" value="1"/>
</dbReference>
<reference key="1">
    <citation type="submission" date="1995-10" db="EMBL/GenBank/DDBJ databases">
        <authorList>
            <person name="Delius H."/>
        </authorList>
    </citation>
    <scope>NUCLEOTIDE SEQUENCE [GENOMIC DNA]</scope>
</reference>
<evidence type="ECO:0000255" key="1">
    <source>
        <dbReference type="HAMAP-Rule" id="MF_04001"/>
    </source>
</evidence>
<evidence type="ECO:0000256" key="2">
    <source>
        <dbReference type="SAM" id="MobiDB-lite"/>
    </source>
</evidence>
<comment type="function">
    <text evidence="1">Plays a role in the initiation of viral DNA replication. A dimer of E2 interacts with a dimer of E1 in order to improve specificity of E1 DNA binding activity. Once the complex recognizes and binds DNA at specific sites, the E2 dimer is removed from DNA. E2 also regulates viral transcription through binding to the E2RE response element (5'-ACCNNNNNNGGT-3') present in multiple copies in the regulatory regions of the viral genome. Activates or represses transcription depending on E2RE's position with regards to proximal promoter elements including the TATA-box. Repression occurs by sterically hindering the assembly of the transcription initiation complex.</text>
</comment>
<comment type="subunit">
    <text evidence="1">Binds DNA as homodimer. Interacts with protein E1; this interaction greatly increases E1 DNA-binding activity. Interacts with protein L1; this interaction enhances E2-dependent replication and transcription activation. Interacts with protein L2; this interaction inhibits E2 transcriptional activity but not DNA replication function E2. Interacts with protein E7; this interaction inhibits E7 oncogenic activity. Interacts with host TAF1; this interaction modulates E2-dependent transcriptional regulation. Interacts with host BRD4; this interaction mediates E2 transcriptional activation function. Additionally, the interaction with host BRD4 on mitotic chromosomes mediates tethering of the viral genome. Interacts with host TOPBP1; this interaction is required for optimal viral DNA replication.</text>
</comment>
<comment type="subcellular location">
    <subcellularLocation>
        <location evidence="1">Host nucleus</location>
    </subcellularLocation>
</comment>
<comment type="PTM">
    <text evidence="1">Phosphorylated.</text>
</comment>
<comment type="similarity">
    <text evidence="1">Belongs to the papillomaviridae E2 protein family.</text>
</comment>
<feature type="chain" id="PRO_0000133200" description="Regulatory protein E2">
    <location>
        <begin position="1"/>
        <end position="503"/>
    </location>
</feature>
<feature type="region of interest" description="Transactivation domain" evidence="1">
    <location>
        <begin position="1"/>
        <end position="201"/>
    </location>
</feature>
<feature type="region of interest" description="Disordered" evidence="2">
    <location>
        <begin position="196"/>
        <end position="404"/>
    </location>
</feature>
<feature type="region of interest" description="DNA-binding domain" evidence="1">
    <location>
        <begin position="419"/>
        <end position="503"/>
    </location>
</feature>
<feature type="compositionally biased region" description="Low complexity" evidence="2">
    <location>
        <begin position="213"/>
        <end position="234"/>
    </location>
</feature>
<feature type="compositionally biased region" description="Basic residues" evidence="2">
    <location>
        <begin position="243"/>
        <end position="293"/>
    </location>
</feature>
<feature type="compositionally biased region" description="Low complexity" evidence="2">
    <location>
        <begin position="317"/>
        <end position="346"/>
    </location>
</feature>
<proteinExistence type="inferred from homology"/>
<name>VE2_HPV21</name>
<protein>
    <recommendedName>
        <fullName evidence="1">Regulatory protein E2</fullName>
    </recommendedName>
</protein>
<organism>
    <name type="scientific">Human papillomavirus 21</name>
    <dbReference type="NCBI Taxonomy" id="31548"/>
    <lineage>
        <taxon>Viruses</taxon>
        <taxon>Monodnaviria</taxon>
        <taxon>Shotokuvirae</taxon>
        <taxon>Cossaviricota</taxon>
        <taxon>Papovaviricetes</taxon>
        <taxon>Zurhausenvirales</taxon>
        <taxon>Papillomaviridae</taxon>
        <taxon>Firstpapillomavirinae</taxon>
        <taxon>Betapapillomavirus</taxon>
        <taxon>Betapapillomavirus 1</taxon>
    </lineage>
</organism>
<gene>
    <name evidence="1" type="primary">E2</name>
</gene>
<keyword id="KW-0010">Activator</keyword>
<keyword id="KW-0235">DNA replication</keyword>
<keyword id="KW-0238">DNA-binding</keyword>
<keyword id="KW-0244">Early protein</keyword>
<keyword id="KW-1048">Host nucleus</keyword>
<keyword id="KW-0597">Phosphoprotein</keyword>
<keyword id="KW-1185">Reference proteome</keyword>
<keyword id="KW-0678">Repressor</keyword>
<keyword id="KW-0804">Transcription</keyword>
<keyword id="KW-0805">Transcription regulation</keyword>
<organismHost>
    <name type="scientific">Homo sapiens</name>
    <name type="common">Human</name>
    <dbReference type="NCBI Taxonomy" id="9606"/>
</organismHost>